<name>METK_NOCFA</name>
<reference key="1">
    <citation type="journal article" date="2004" name="Proc. Natl. Acad. Sci. U.S.A.">
        <title>The complete genomic sequence of Nocardia farcinica IFM 10152.</title>
        <authorList>
            <person name="Ishikawa J."/>
            <person name="Yamashita A."/>
            <person name="Mikami Y."/>
            <person name="Hoshino Y."/>
            <person name="Kurita H."/>
            <person name="Hotta K."/>
            <person name="Shiba T."/>
            <person name="Hattori M."/>
        </authorList>
    </citation>
    <scope>NUCLEOTIDE SEQUENCE [LARGE SCALE GENOMIC DNA]</scope>
    <source>
        <strain>IFM 10152</strain>
    </source>
</reference>
<protein>
    <recommendedName>
        <fullName evidence="1">S-adenosylmethionine synthase</fullName>
        <shortName evidence="1">AdoMet synthase</shortName>
        <ecNumber evidence="1">2.5.1.6</ecNumber>
    </recommendedName>
    <alternativeName>
        <fullName evidence="1">MAT</fullName>
    </alternativeName>
    <alternativeName>
        <fullName evidence="1">Methionine adenosyltransferase</fullName>
    </alternativeName>
</protein>
<evidence type="ECO:0000255" key="1">
    <source>
        <dbReference type="HAMAP-Rule" id="MF_00086"/>
    </source>
</evidence>
<comment type="function">
    <text evidence="1">Catalyzes the formation of S-adenosylmethionine (AdoMet) from methionine and ATP. The overall synthetic reaction is composed of two sequential steps, AdoMet formation and the subsequent tripolyphosphate hydrolysis which occurs prior to release of AdoMet from the enzyme.</text>
</comment>
<comment type="catalytic activity">
    <reaction evidence="1">
        <text>L-methionine + ATP + H2O = S-adenosyl-L-methionine + phosphate + diphosphate</text>
        <dbReference type="Rhea" id="RHEA:21080"/>
        <dbReference type="ChEBI" id="CHEBI:15377"/>
        <dbReference type="ChEBI" id="CHEBI:30616"/>
        <dbReference type="ChEBI" id="CHEBI:33019"/>
        <dbReference type="ChEBI" id="CHEBI:43474"/>
        <dbReference type="ChEBI" id="CHEBI:57844"/>
        <dbReference type="ChEBI" id="CHEBI:59789"/>
        <dbReference type="EC" id="2.5.1.6"/>
    </reaction>
</comment>
<comment type="cofactor">
    <cofactor evidence="1">
        <name>Mg(2+)</name>
        <dbReference type="ChEBI" id="CHEBI:18420"/>
    </cofactor>
    <text evidence="1">Binds 2 divalent ions per subunit.</text>
</comment>
<comment type="cofactor">
    <cofactor evidence="1">
        <name>K(+)</name>
        <dbReference type="ChEBI" id="CHEBI:29103"/>
    </cofactor>
    <text evidence="1">Binds 1 potassium ion per subunit.</text>
</comment>
<comment type="pathway">
    <text evidence="1">Amino-acid biosynthesis; S-adenosyl-L-methionine biosynthesis; S-adenosyl-L-methionine from L-methionine: step 1/1.</text>
</comment>
<comment type="subunit">
    <text evidence="1">Homotetramer; dimer of dimers.</text>
</comment>
<comment type="subcellular location">
    <subcellularLocation>
        <location evidence="1">Cytoplasm</location>
    </subcellularLocation>
</comment>
<comment type="similarity">
    <text evidence="1">Belongs to the AdoMet synthase family.</text>
</comment>
<dbReference type="EC" id="2.5.1.6" evidence="1"/>
<dbReference type="EMBL" id="AP006618">
    <property type="protein sequence ID" value="BAD58461.1"/>
    <property type="molecule type" value="Genomic_DNA"/>
</dbReference>
<dbReference type="RefSeq" id="WP_011210146.1">
    <property type="nucleotide sequence ID" value="NC_006361.1"/>
</dbReference>
<dbReference type="SMR" id="Q5YTN0"/>
<dbReference type="STRING" id="247156.NFA_36130"/>
<dbReference type="GeneID" id="61134309"/>
<dbReference type="KEGG" id="nfa:NFA_36130"/>
<dbReference type="eggNOG" id="COG0192">
    <property type="taxonomic scope" value="Bacteria"/>
</dbReference>
<dbReference type="HOGENOM" id="CLU_041802_1_1_11"/>
<dbReference type="OrthoDB" id="9801686at2"/>
<dbReference type="UniPathway" id="UPA00315">
    <property type="reaction ID" value="UER00080"/>
</dbReference>
<dbReference type="Proteomes" id="UP000006820">
    <property type="component" value="Chromosome"/>
</dbReference>
<dbReference type="GO" id="GO:0005737">
    <property type="term" value="C:cytoplasm"/>
    <property type="evidence" value="ECO:0007669"/>
    <property type="project" value="UniProtKB-SubCell"/>
</dbReference>
<dbReference type="GO" id="GO:0005524">
    <property type="term" value="F:ATP binding"/>
    <property type="evidence" value="ECO:0007669"/>
    <property type="project" value="UniProtKB-UniRule"/>
</dbReference>
<dbReference type="GO" id="GO:0000287">
    <property type="term" value="F:magnesium ion binding"/>
    <property type="evidence" value="ECO:0007669"/>
    <property type="project" value="UniProtKB-UniRule"/>
</dbReference>
<dbReference type="GO" id="GO:0004478">
    <property type="term" value="F:methionine adenosyltransferase activity"/>
    <property type="evidence" value="ECO:0007669"/>
    <property type="project" value="UniProtKB-UniRule"/>
</dbReference>
<dbReference type="GO" id="GO:0006730">
    <property type="term" value="P:one-carbon metabolic process"/>
    <property type="evidence" value="ECO:0007669"/>
    <property type="project" value="UniProtKB-KW"/>
</dbReference>
<dbReference type="GO" id="GO:0006556">
    <property type="term" value="P:S-adenosylmethionine biosynthetic process"/>
    <property type="evidence" value="ECO:0007669"/>
    <property type="project" value="UniProtKB-UniRule"/>
</dbReference>
<dbReference type="CDD" id="cd18079">
    <property type="entry name" value="S-AdoMet_synt"/>
    <property type="match status" value="1"/>
</dbReference>
<dbReference type="FunFam" id="3.30.300.10:FF:000006">
    <property type="entry name" value="S-adenosylmethionine synthase"/>
    <property type="match status" value="1"/>
</dbReference>
<dbReference type="Gene3D" id="3.30.300.10">
    <property type="match status" value="3"/>
</dbReference>
<dbReference type="HAMAP" id="MF_00086">
    <property type="entry name" value="S_AdoMet_synth1"/>
    <property type="match status" value="1"/>
</dbReference>
<dbReference type="InterPro" id="IPR022631">
    <property type="entry name" value="ADOMET_SYNTHASE_CS"/>
</dbReference>
<dbReference type="InterPro" id="IPR022630">
    <property type="entry name" value="S-AdoMet_synt_C"/>
</dbReference>
<dbReference type="InterPro" id="IPR022629">
    <property type="entry name" value="S-AdoMet_synt_central"/>
</dbReference>
<dbReference type="InterPro" id="IPR022628">
    <property type="entry name" value="S-AdoMet_synt_N"/>
</dbReference>
<dbReference type="InterPro" id="IPR002133">
    <property type="entry name" value="S-AdoMet_synthetase"/>
</dbReference>
<dbReference type="InterPro" id="IPR022636">
    <property type="entry name" value="S-AdoMet_synthetase_sfam"/>
</dbReference>
<dbReference type="NCBIfam" id="TIGR01034">
    <property type="entry name" value="metK"/>
    <property type="match status" value="1"/>
</dbReference>
<dbReference type="PANTHER" id="PTHR11964">
    <property type="entry name" value="S-ADENOSYLMETHIONINE SYNTHETASE"/>
    <property type="match status" value="1"/>
</dbReference>
<dbReference type="Pfam" id="PF02773">
    <property type="entry name" value="S-AdoMet_synt_C"/>
    <property type="match status" value="1"/>
</dbReference>
<dbReference type="Pfam" id="PF02772">
    <property type="entry name" value="S-AdoMet_synt_M"/>
    <property type="match status" value="1"/>
</dbReference>
<dbReference type="Pfam" id="PF00438">
    <property type="entry name" value="S-AdoMet_synt_N"/>
    <property type="match status" value="1"/>
</dbReference>
<dbReference type="PIRSF" id="PIRSF000497">
    <property type="entry name" value="MAT"/>
    <property type="match status" value="1"/>
</dbReference>
<dbReference type="SUPFAM" id="SSF55973">
    <property type="entry name" value="S-adenosylmethionine synthetase"/>
    <property type="match status" value="3"/>
</dbReference>
<dbReference type="PROSITE" id="PS00376">
    <property type="entry name" value="ADOMET_SYNTHASE_1"/>
    <property type="match status" value="1"/>
</dbReference>
<dbReference type="PROSITE" id="PS00377">
    <property type="entry name" value="ADOMET_SYNTHASE_2"/>
    <property type="match status" value="1"/>
</dbReference>
<sequence>MRTSGSRLFTSESVTEGHPDKICDAISDSILDALLAEDPRSRVAVETLVTTGQVHVAGEVTTSAYADIPRIVREKVLEIGYDSSAKGFDGNSCGVNIAIGAQSPDIAQGVDTSHEARVGGTDDEIAKQGAGDQGLMFGYATTDTPELMPLPIALAHRLSRKLTEVRKTGVLPYLRPDGKTQVTIEYDGDRPVRLDTVVISTQHAADIDLDNLLAPDIREKVVDAVLADLDLPSPLDTSDIRLLVNPTGKFVLGGPMGDAGLTGRKIIVDTYGGMARHGGGAFSGKDPSKVDRSAAYAMRWVAKNVVAAGLSERVEVQVAYAIGKAAPVGLFVETFGTEKVDPARIAAAITEVFDLRPGAIIRDLDLLRPIYAPTAAYGHFGRTDIDLPWEHTDRADKLRAAAGL</sequence>
<gene>
    <name evidence="1" type="primary">metK</name>
    <name type="ordered locus">NFA_36130</name>
</gene>
<feature type="chain" id="PRO_0000174562" description="S-adenosylmethionine synthase">
    <location>
        <begin position="1"/>
        <end position="404"/>
    </location>
</feature>
<feature type="region of interest" description="Flexible loop" evidence="1">
    <location>
        <begin position="102"/>
        <end position="112"/>
    </location>
</feature>
<feature type="binding site" description="in other chain" evidence="1">
    <location>
        <position position="18"/>
    </location>
    <ligand>
        <name>ATP</name>
        <dbReference type="ChEBI" id="CHEBI:30616"/>
        <note>ligand shared between two neighboring subunits</note>
    </ligand>
</feature>
<feature type="binding site" evidence="1">
    <location>
        <position position="20"/>
    </location>
    <ligand>
        <name>Mg(2+)</name>
        <dbReference type="ChEBI" id="CHEBI:18420"/>
    </ligand>
</feature>
<feature type="binding site" evidence="1">
    <location>
        <position position="46"/>
    </location>
    <ligand>
        <name>K(+)</name>
        <dbReference type="ChEBI" id="CHEBI:29103"/>
    </ligand>
</feature>
<feature type="binding site" description="in other chain" evidence="1">
    <location>
        <position position="59"/>
    </location>
    <ligand>
        <name>L-methionine</name>
        <dbReference type="ChEBI" id="CHEBI:57844"/>
        <note>ligand shared between two neighboring subunits</note>
    </ligand>
</feature>
<feature type="binding site" description="in other chain" evidence="1">
    <location>
        <position position="102"/>
    </location>
    <ligand>
        <name>L-methionine</name>
        <dbReference type="ChEBI" id="CHEBI:57844"/>
        <note>ligand shared between two neighboring subunits</note>
    </ligand>
</feature>
<feature type="binding site" description="in other chain" evidence="1">
    <location>
        <begin position="177"/>
        <end position="179"/>
    </location>
    <ligand>
        <name>ATP</name>
        <dbReference type="ChEBI" id="CHEBI:30616"/>
        <note>ligand shared between two neighboring subunits</note>
    </ligand>
</feature>
<feature type="binding site" description="in other chain" evidence="1">
    <location>
        <begin position="249"/>
        <end position="250"/>
    </location>
    <ligand>
        <name>ATP</name>
        <dbReference type="ChEBI" id="CHEBI:30616"/>
        <note>ligand shared between two neighboring subunits</note>
    </ligand>
</feature>
<feature type="binding site" evidence="1">
    <location>
        <position position="258"/>
    </location>
    <ligand>
        <name>ATP</name>
        <dbReference type="ChEBI" id="CHEBI:30616"/>
        <note>ligand shared between two neighboring subunits</note>
    </ligand>
</feature>
<feature type="binding site" evidence="1">
    <location>
        <position position="258"/>
    </location>
    <ligand>
        <name>L-methionine</name>
        <dbReference type="ChEBI" id="CHEBI:57844"/>
        <note>ligand shared between two neighboring subunits</note>
    </ligand>
</feature>
<feature type="binding site" description="in other chain" evidence="1">
    <location>
        <begin position="264"/>
        <end position="265"/>
    </location>
    <ligand>
        <name>ATP</name>
        <dbReference type="ChEBI" id="CHEBI:30616"/>
        <note>ligand shared between two neighboring subunits</note>
    </ligand>
</feature>
<feature type="binding site" evidence="1">
    <location>
        <position position="281"/>
    </location>
    <ligand>
        <name>ATP</name>
        <dbReference type="ChEBI" id="CHEBI:30616"/>
        <note>ligand shared between two neighboring subunits</note>
    </ligand>
</feature>
<feature type="binding site" evidence="1">
    <location>
        <position position="285"/>
    </location>
    <ligand>
        <name>ATP</name>
        <dbReference type="ChEBI" id="CHEBI:30616"/>
        <note>ligand shared between two neighboring subunits</note>
    </ligand>
</feature>
<feature type="binding site" description="in other chain" evidence="1">
    <location>
        <position position="289"/>
    </location>
    <ligand>
        <name>L-methionine</name>
        <dbReference type="ChEBI" id="CHEBI:57844"/>
        <note>ligand shared between two neighboring subunits</note>
    </ligand>
</feature>
<organism>
    <name type="scientific">Nocardia farcinica (strain IFM 10152)</name>
    <dbReference type="NCBI Taxonomy" id="247156"/>
    <lineage>
        <taxon>Bacteria</taxon>
        <taxon>Bacillati</taxon>
        <taxon>Actinomycetota</taxon>
        <taxon>Actinomycetes</taxon>
        <taxon>Mycobacteriales</taxon>
        <taxon>Nocardiaceae</taxon>
        <taxon>Nocardia</taxon>
    </lineage>
</organism>
<accession>Q5YTN0</accession>
<keyword id="KW-0067">ATP-binding</keyword>
<keyword id="KW-0963">Cytoplasm</keyword>
<keyword id="KW-0460">Magnesium</keyword>
<keyword id="KW-0479">Metal-binding</keyword>
<keyword id="KW-0547">Nucleotide-binding</keyword>
<keyword id="KW-0554">One-carbon metabolism</keyword>
<keyword id="KW-0630">Potassium</keyword>
<keyword id="KW-1185">Reference proteome</keyword>
<keyword id="KW-0808">Transferase</keyword>
<proteinExistence type="inferred from homology"/>